<protein>
    <recommendedName>
        <fullName>Replication-associated protein A</fullName>
        <shortName>RepA</shortName>
        <ecNumber>3.1.21.-</ecNumber>
    </recommendedName>
</protein>
<sequence length="272" mass="31329">MASSSSNRQFSHRNANTFLTYPKCPENPEIACQMIWELVVRWIPKYILCAREAHKDGSLHLHALLQTEKPVRISDSRFFDINGFHPNIQSAKSVNRVRDYILKEPLAVFERGTFIPRKSPFLGKSDSEVKEKKPSKDEIMRDIISHATSKAEYLSMIQKELPFDWSTKLQYFEYSANKLFPEIQEEFTNPHPPSSPDLLCNESINDWLQPNIFQVSPEAYMLLQPTCYTLEDAISDLQWMDSVSSHQMKDQESRASTSSAQQEPENLLGPEA</sequence>
<proteinExistence type="evidence at protein level"/>
<keyword id="KW-0010">Activator</keyword>
<keyword id="KW-0025">Alternative splicing</keyword>
<keyword id="KW-0190">Covalent protein-DNA linkage</keyword>
<keyword id="KW-0235">DNA replication</keyword>
<keyword id="KW-0238">DNA-binding</keyword>
<keyword id="KW-0255">Endonuclease</keyword>
<keyword id="KW-1078">G1/S host cell cycle checkpoint dysregulation by virus</keyword>
<keyword id="KW-1035">Host cytoplasm</keyword>
<keyword id="KW-1048">Host nucleus</keyword>
<keyword id="KW-0945">Host-virus interaction</keyword>
<keyword id="KW-0378">Hydrolase</keyword>
<keyword id="KW-0479">Metal-binding</keyword>
<keyword id="KW-1121">Modulation of host cell cycle by virus</keyword>
<keyword id="KW-0540">Nuclease</keyword>
<keyword id="KW-0547">Nucleotide-binding</keyword>
<keyword id="KW-0548">Nucleotidyltransferase</keyword>
<keyword id="KW-1185">Reference proteome</keyword>
<keyword id="KW-0678">Repressor</keyword>
<keyword id="KW-0808">Transferase</keyword>
<organism>
    <name type="scientific">Maize streak virus genotype A (isolate South Africa)</name>
    <name type="common">MSV</name>
    <dbReference type="NCBI Taxonomy" id="10824"/>
    <lineage>
        <taxon>Viruses</taxon>
        <taxon>Monodnaviria</taxon>
        <taxon>Shotokuvirae</taxon>
        <taxon>Cressdnaviricota</taxon>
        <taxon>Repensiviricetes</taxon>
        <taxon>Geplafuvirales</taxon>
        <taxon>Geminiviridae</taxon>
        <taxon>Mastrevirus</taxon>
        <taxon>Maize streak virus</taxon>
    </lineage>
</organism>
<evidence type="ECO:0000250" key="1"/>
<evidence type="ECO:0000255" key="2">
    <source>
        <dbReference type="PROSITE-ProRule" id="PRU01364"/>
    </source>
</evidence>
<evidence type="ECO:0000256" key="3">
    <source>
        <dbReference type="SAM" id="MobiDB-lite"/>
    </source>
</evidence>
<evidence type="ECO:0000269" key="4">
    <source>
    </source>
</evidence>
<evidence type="ECO:0000305" key="5"/>
<reference key="1">
    <citation type="journal article" date="1988" name="Nucleic Acids Res.">
        <title>Infectivity and complete nucleotide sequence of the genome of a South African isolate of maize streak virus.</title>
        <authorList>
            <person name="Lazarowitz S.G."/>
        </authorList>
    </citation>
    <scope>NUCLEOTIDE SEQUENCE [GENOMIC DNA]</scope>
</reference>
<reference key="2">
    <citation type="journal article" date="2005" name="J. Gen. Virol.">
        <title>A three-nucleotide mutation altering the Maize streak virus Rep pRBR-interaction motif reduces symptom severity in maize and partially reverts at high frequency without restoring pRBR-Rep binding.</title>
        <authorList>
            <person name="Shepherd D.N."/>
            <person name="Martin D.P."/>
            <person name="McGivern D.R."/>
            <person name="Boulton M.I."/>
            <person name="Thomson J.A."/>
            <person name="Rybicki E.P."/>
        </authorList>
    </citation>
    <scope>INTERACTION WITH ZEA MAYS RBR1</scope>
    <scope>MUTAGENESIS OF 201-ASN-LYS-202</scope>
    <source>
        <strain>Isolate Kom</strain>
    </source>
</reference>
<dbReference type="EC" id="3.1.21.-"/>
<dbReference type="EMBL" id="Y00514">
    <property type="protein sequence ID" value="CAA68569.1"/>
    <property type="molecule type" value="Genomic_DNA"/>
</dbReference>
<dbReference type="PIR" id="S04806">
    <property type="entry name" value="S04806"/>
</dbReference>
<dbReference type="SMR" id="P14990"/>
<dbReference type="Proteomes" id="UP000006541">
    <property type="component" value="Segment"/>
</dbReference>
<dbReference type="GO" id="GO:0030430">
    <property type="term" value="C:host cell cytoplasm"/>
    <property type="evidence" value="ECO:0007669"/>
    <property type="project" value="UniProtKB-SubCell"/>
</dbReference>
<dbReference type="GO" id="GO:0042025">
    <property type="term" value="C:host cell nucleus"/>
    <property type="evidence" value="ECO:0007669"/>
    <property type="project" value="UniProtKB-SubCell"/>
</dbReference>
<dbReference type="GO" id="GO:0003677">
    <property type="term" value="F:DNA binding"/>
    <property type="evidence" value="ECO:0007669"/>
    <property type="project" value="UniProtKB-KW"/>
</dbReference>
<dbReference type="GO" id="GO:0016888">
    <property type="term" value="F:endodeoxyribonuclease activity, producing 5'-phosphomonoesters"/>
    <property type="evidence" value="ECO:0007669"/>
    <property type="project" value="InterPro"/>
</dbReference>
<dbReference type="GO" id="GO:0046872">
    <property type="term" value="F:metal ion binding"/>
    <property type="evidence" value="ECO:0007669"/>
    <property type="project" value="UniProtKB-KW"/>
</dbReference>
<dbReference type="GO" id="GO:0000166">
    <property type="term" value="F:nucleotide binding"/>
    <property type="evidence" value="ECO:0007669"/>
    <property type="project" value="UniProtKB-KW"/>
</dbReference>
<dbReference type="GO" id="GO:0016779">
    <property type="term" value="F:nucleotidyltransferase activity"/>
    <property type="evidence" value="ECO:0007669"/>
    <property type="project" value="UniProtKB-KW"/>
</dbReference>
<dbReference type="GO" id="GO:0005198">
    <property type="term" value="F:structural molecule activity"/>
    <property type="evidence" value="ECO:0007669"/>
    <property type="project" value="InterPro"/>
</dbReference>
<dbReference type="GO" id="GO:0006260">
    <property type="term" value="P:DNA replication"/>
    <property type="evidence" value="ECO:0007669"/>
    <property type="project" value="UniProtKB-KW"/>
</dbReference>
<dbReference type="GO" id="GO:0039684">
    <property type="term" value="P:rolling circle single-stranded viral DNA replication"/>
    <property type="evidence" value="ECO:0000314"/>
    <property type="project" value="UniProtKB"/>
</dbReference>
<dbReference type="GO" id="GO:0039645">
    <property type="term" value="P:symbiont-mediated perturbation of host cell cycle G1/S transition checkpoint"/>
    <property type="evidence" value="ECO:0007669"/>
    <property type="project" value="UniProtKB-KW"/>
</dbReference>
<dbReference type="Gene3D" id="3.40.1310.20">
    <property type="match status" value="1"/>
</dbReference>
<dbReference type="InterPro" id="IPR049912">
    <property type="entry name" value="CRESS_DNA_REP"/>
</dbReference>
<dbReference type="InterPro" id="IPR001146">
    <property type="entry name" value="Gemini_AL1_MSV"/>
</dbReference>
<dbReference type="InterPro" id="IPR001191">
    <property type="entry name" value="Gemini_AL1_REP"/>
</dbReference>
<dbReference type="InterPro" id="IPR022692">
    <property type="entry name" value="Gemini_AL1_REP_central"/>
</dbReference>
<dbReference type="Pfam" id="PF00799">
    <property type="entry name" value="Gemini_AL1"/>
    <property type="match status" value="1"/>
</dbReference>
<dbReference type="Pfam" id="PF08283">
    <property type="entry name" value="Gemini_AL1_M"/>
    <property type="match status" value="1"/>
</dbReference>
<dbReference type="PRINTS" id="PR00227">
    <property type="entry name" value="GEMCOATAL1"/>
</dbReference>
<dbReference type="PRINTS" id="PR00229">
    <property type="entry name" value="GEMCOATMSVL1"/>
</dbReference>
<dbReference type="SUPFAM" id="SSF55464">
    <property type="entry name" value="Origin of replication-binding domain, RBD-like"/>
    <property type="match status" value="1"/>
</dbReference>
<dbReference type="PROSITE" id="PS52020">
    <property type="entry name" value="CRESS_DNA_REP"/>
    <property type="match status" value="1"/>
</dbReference>
<gene>
    <name type="ORF">C1</name>
</gene>
<name>REPA_MSVS</name>
<feature type="chain" id="PRO_0000222208" description="Replication-associated protein A">
    <location>
        <begin position="1"/>
        <end position="272"/>
    </location>
</feature>
<feature type="domain" description="CRESS-DNA virus Rep endonuclease" evidence="2">
    <location>
        <begin position="11"/>
        <end position="114"/>
    </location>
</feature>
<feature type="region of interest" description="Oligomerization" evidence="1">
    <location>
        <begin position="175"/>
        <end position="187"/>
    </location>
</feature>
<feature type="region of interest" description="Disordered" evidence="3">
    <location>
        <begin position="245"/>
        <end position="272"/>
    </location>
</feature>
<feature type="short sequence motif" description="RCR-1" evidence="2">
    <location>
        <begin position="18"/>
        <end position="21"/>
    </location>
</feature>
<feature type="short sequence motif" description="RCR-2" evidence="2">
    <location>
        <begin position="60"/>
        <end position="62"/>
    </location>
</feature>
<feature type="short sequence motif" description="RCR-3" evidence="2">
    <location>
        <begin position="100"/>
        <end position="103"/>
    </location>
</feature>
<feature type="short sequence motif" description="LXCXE motif, interaction with host RBR1" evidence="1">
    <location>
        <begin position="198"/>
        <end position="202"/>
    </location>
</feature>
<feature type="compositionally biased region" description="Polar residues" evidence="3">
    <location>
        <begin position="254"/>
        <end position="264"/>
    </location>
</feature>
<feature type="active site" description="For DNA cleavage activity" evidence="2">
    <location>
        <position position="100"/>
    </location>
</feature>
<feature type="binding site" evidence="2">
    <location>
        <position position="52"/>
    </location>
    <ligand>
        <name>a divalent metal cation</name>
        <dbReference type="ChEBI" id="CHEBI:60240"/>
    </ligand>
</feature>
<feature type="binding site" evidence="2">
    <location>
        <position position="60"/>
    </location>
    <ligand>
        <name>a divalent metal cation</name>
        <dbReference type="ChEBI" id="CHEBI:60240"/>
    </ligand>
</feature>
<feature type="binding site" evidence="2">
    <location>
        <position position="62"/>
    </location>
    <ligand>
        <name>a divalent metal cation</name>
        <dbReference type="ChEBI" id="CHEBI:60240"/>
    </ligand>
</feature>
<feature type="binding site" evidence="2">
    <location>
        <position position="104"/>
    </location>
    <ligand>
        <name>a divalent metal cation</name>
        <dbReference type="ChEBI" id="CHEBI:60240"/>
    </ligand>
</feature>
<feature type="mutagenesis site" description="Complete loss of interaction with RBR1." evidence="4">
    <original>NE</original>
    <variation>LI</variation>
    <location>
        <begin position="201"/>
        <end position="202"/>
    </location>
</feature>
<feature type="mutagenesis site" description="Complete loss of interaction with RBR1." evidence="4">
    <original>NE</original>
    <variation>LK</variation>
    <location>
        <begin position="201"/>
        <end position="202"/>
    </location>
</feature>
<comment type="function">
    <text evidence="1">Implicated in enhancement of V-sense gene expression. Acts a an inhibitor of C-sense gene transcription (By similarity).</text>
</comment>
<comment type="cofactor">
    <cofactor evidence="2">
        <name>Mg(2+)</name>
        <dbReference type="ChEBI" id="CHEBI:18420"/>
    </cofactor>
    <cofactor evidence="2">
        <name>Mn(2+)</name>
        <dbReference type="ChEBI" id="CHEBI:29035"/>
    </cofactor>
    <text evidence="2">Divalent metal cations, possibly Mg(2+) or Mn(2+).</text>
</comment>
<comment type="subunit">
    <text evidence="1">Homooligomer. Interacts (via LXCXE domain) with host retinoblastoma-related protein 1 (RBR1), and may thereby deregulate the host cell cycle. Part of the C- and V-complexes which are RepA-Rep-DNA complexes involved in the c-sense and v-sense transcription (By similarity).</text>
</comment>
<comment type="subcellular location">
    <subcellularLocation>
        <location evidence="1">Host nucleus</location>
    </subcellularLocation>
    <subcellularLocation>
        <location evidence="1">Host cytoplasm</location>
    </subcellularLocation>
</comment>
<comment type="alternative products">
    <event type="alternative splicing"/>
    <isoform>
        <id>P14990-1</id>
        <name>RepA</name>
        <sequence type="displayed"/>
    </isoform>
    <isoform>
        <id>P14989-1</id>
        <name>Rep</name>
        <sequence type="external"/>
    </isoform>
</comment>
<comment type="domain">
    <text>There are 3 rolling circle replication (RCR) motifs. RCR-2 may be involved in metal coordination. RCR-3 is required for phosphodiester bond cleavage for initiation of RCR.</text>
</comment>
<comment type="domain">
    <text>The LXCXE motif specifically binds to host RBR1.</text>
</comment>
<comment type="miscellaneous">
    <molecule>Isoform RepA</molecule>
    <text>Produced from the unspliced transcript.</text>
</comment>
<comment type="similarity">
    <text evidence="5">Belongs to the geminiviridae Rep protein family.</text>
</comment>
<accession>P14990</accession>
<organismHost>
    <name type="scientific">Avena sativa</name>
    <name type="common">Oat</name>
    <dbReference type="NCBI Taxonomy" id="4498"/>
</organismHost>
<organismHost>
    <name type="scientific">Axonopus compressus</name>
    <dbReference type="NCBI Taxonomy" id="217170"/>
</organismHost>
<organismHost>
    <name type="scientific">Cenchrus americanus</name>
    <name type="common">Pearl millet</name>
    <name type="synonym">Pennisetum glaucum</name>
    <dbReference type="NCBI Taxonomy" id="4543"/>
</organismHost>
<organismHost>
    <name type="scientific">Cenchrus polystachios</name>
    <dbReference type="NCBI Taxonomy" id="281129"/>
</organismHost>
<organismHost>
    <name type="scientific">Coix lacryma-jobi</name>
    <name type="common">Job's tears</name>
    <dbReference type="NCBI Taxonomy" id="4505"/>
</organismHost>
<organismHost>
    <name type="scientific">Dactyloctenium aegyptium</name>
    <dbReference type="NCBI Taxonomy" id="270102"/>
</organismHost>
<organismHost>
    <name type="scientific">Digitaria</name>
    <dbReference type="NCBI Taxonomy" id="66017"/>
</organismHost>
<organismHost>
    <name type="scientific">Echinochloa colona</name>
    <dbReference type="NCBI Taxonomy" id="90396"/>
</organismHost>
<organismHost>
    <name type="scientific">Eleusine coracana</name>
    <name type="common">Indian finger millet</name>
    <name type="synonym">Ragi</name>
    <dbReference type="NCBI Taxonomy" id="4511"/>
</organismHost>
<organismHost>
    <name type="scientific">Eleusine indica</name>
    <name type="common">Goosegrass</name>
    <name type="synonym">Cynosurus indicus</name>
    <dbReference type="NCBI Taxonomy" id="29674"/>
</organismHost>
<organismHost>
    <name type="scientific">Hordeum vulgare</name>
    <name type="common">Barley</name>
    <dbReference type="NCBI Taxonomy" id="4513"/>
</organismHost>
<organismHost>
    <name type="scientific">Megathyrsus maximus</name>
    <dbReference type="NCBI Taxonomy" id="59788"/>
</organismHost>
<organismHost>
    <name type="scientific">Melinis repens</name>
    <name type="common">Red Natal grass</name>
    <name type="synonym">Rhynchelytrum repens</name>
    <dbReference type="NCBI Taxonomy" id="29709"/>
</organismHost>
<organismHost>
    <name type="scientific">Oryza glaberrima</name>
    <name type="common">African rice</name>
    <dbReference type="NCBI Taxonomy" id="4538"/>
</organismHost>
<organismHost>
    <name type="scientific">Oryza sativa</name>
    <name type="common">Rice</name>
    <dbReference type="NCBI Taxonomy" id="4530"/>
</organismHost>
<organismHost>
    <name type="scientific">Paspalum conjugatum</name>
    <name type="common">Hilo grass</name>
    <dbReference type="NCBI Taxonomy" id="158143"/>
</organismHost>
<organismHost>
    <name type="scientific">Paspalum notatum</name>
    <name type="common">Bahia grass</name>
    <dbReference type="NCBI Taxonomy" id="147272"/>
</organismHost>
<organismHost>
    <name type="scientific">Paspalum scrobiculatum</name>
    <dbReference type="NCBI Taxonomy" id="173849"/>
</organismHost>
<organismHost>
    <name type="scientific">Rottboellia cochinchinensis</name>
    <dbReference type="NCBI Taxonomy" id="300125"/>
</organismHost>
<organismHost>
    <name type="scientific">Saccharum officinarum</name>
    <name type="common">Sugarcane</name>
    <dbReference type="NCBI Taxonomy" id="4547"/>
</organismHost>
<organismHost>
    <name type="scientific">Setaria barbata</name>
    <dbReference type="NCBI Taxonomy" id="192628"/>
</organismHost>
<organismHost>
    <name type="scientific">Triticum aestivum</name>
    <name type="common">Wheat</name>
    <dbReference type="NCBI Taxonomy" id="4565"/>
</organismHost>
<organismHost>
    <name type="scientific">Urochloa deflexa</name>
    <dbReference type="NCBI Taxonomy" id="240436"/>
</organismHost>
<organismHost>
    <name type="scientific">Zea mays</name>
    <name type="common">Maize</name>
    <dbReference type="NCBI Taxonomy" id="4577"/>
</organismHost>